<keyword id="KW-0169">Cobalamin biosynthesis</keyword>
<keyword id="KW-0328">Glycosyltransferase</keyword>
<keyword id="KW-0808">Transferase</keyword>
<feature type="chain" id="PRO_1000125109" description="Nicotinate-nucleotide--dimethylbenzimidazole phosphoribosyltransferase">
    <location>
        <begin position="1"/>
        <end position="361"/>
    </location>
</feature>
<feature type="active site" description="Proton acceptor" evidence="1">
    <location>
        <position position="314"/>
    </location>
</feature>
<dbReference type="EC" id="2.4.2.21" evidence="1"/>
<dbReference type="EMBL" id="AP010918">
    <property type="protein sequence ID" value="BAH26501.1"/>
    <property type="molecule type" value="Genomic_DNA"/>
</dbReference>
<dbReference type="RefSeq" id="WP_003411429.1">
    <property type="nucleotide sequence ID" value="NZ_CP014566.1"/>
</dbReference>
<dbReference type="SMR" id="C1AQC2"/>
<dbReference type="GeneID" id="45426183"/>
<dbReference type="KEGG" id="mbt:JTY_2217"/>
<dbReference type="HOGENOM" id="CLU_002982_0_2_11"/>
<dbReference type="UniPathway" id="UPA00061">
    <property type="reaction ID" value="UER00516"/>
</dbReference>
<dbReference type="GO" id="GO:0008939">
    <property type="term" value="F:nicotinate-nucleotide-dimethylbenzimidazole phosphoribosyltransferase activity"/>
    <property type="evidence" value="ECO:0007669"/>
    <property type="project" value="UniProtKB-UniRule"/>
</dbReference>
<dbReference type="GO" id="GO:0009236">
    <property type="term" value="P:cobalamin biosynthetic process"/>
    <property type="evidence" value="ECO:0007669"/>
    <property type="project" value="UniProtKB-KW"/>
</dbReference>
<dbReference type="CDD" id="cd02439">
    <property type="entry name" value="DMB-PRT_CobT"/>
    <property type="match status" value="1"/>
</dbReference>
<dbReference type="Gene3D" id="1.10.1610.10">
    <property type="match status" value="1"/>
</dbReference>
<dbReference type="Gene3D" id="3.40.50.10210">
    <property type="match status" value="1"/>
</dbReference>
<dbReference type="HAMAP" id="MF_00230">
    <property type="entry name" value="CobT"/>
    <property type="match status" value="1"/>
</dbReference>
<dbReference type="InterPro" id="IPR003200">
    <property type="entry name" value="Nict_dMeBzImd_PRibTrfase"/>
</dbReference>
<dbReference type="InterPro" id="IPR017846">
    <property type="entry name" value="Nict_dMeBzImd_PRibTrfase_bact"/>
</dbReference>
<dbReference type="InterPro" id="IPR023195">
    <property type="entry name" value="Nict_dMeBzImd_PRibTrfase_N"/>
</dbReference>
<dbReference type="InterPro" id="IPR036087">
    <property type="entry name" value="Nict_dMeBzImd_PRibTrfase_sf"/>
</dbReference>
<dbReference type="NCBIfam" id="TIGR03160">
    <property type="entry name" value="cobT_DBIPRT"/>
    <property type="match status" value="1"/>
</dbReference>
<dbReference type="NCBIfam" id="NF000996">
    <property type="entry name" value="PRK00105.1"/>
    <property type="match status" value="1"/>
</dbReference>
<dbReference type="PANTHER" id="PTHR43463">
    <property type="entry name" value="NICOTINATE-NUCLEOTIDE--DIMETHYLBENZIMIDAZOLE PHOSPHORIBOSYLTRANSFERASE"/>
    <property type="match status" value="1"/>
</dbReference>
<dbReference type="PANTHER" id="PTHR43463:SF1">
    <property type="entry name" value="NICOTINATE-NUCLEOTIDE--DIMETHYLBENZIMIDAZOLE PHOSPHORIBOSYLTRANSFERASE"/>
    <property type="match status" value="1"/>
</dbReference>
<dbReference type="Pfam" id="PF02277">
    <property type="entry name" value="DBI_PRT"/>
    <property type="match status" value="1"/>
</dbReference>
<dbReference type="SUPFAM" id="SSF52733">
    <property type="entry name" value="Nicotinate mononucleotide:5,6-dimethylbenzimidazole phosphoribosyltransferase (CobT)"/>
    <property type="match status" value="1"/>
</dbReference>
<sequence>MIGFAPVSTPDAAAEAAARARQDSLTKPRGALGSLEDLSVWVASCQQRCPPRQFERARVVVFAGDHGVARSGVSAYPPEVTAQMVANIDAGGAAINALADVAGATVRVADLAVDADPLSERIGAHKVRRGSGNIATEDALTNDETAAAITAGQQIADEEVDAGADLLIAGDMGIGNTTAAAVLVAALTDAEPVAVVGFGTGIDDAGWARKTAAVRDALFRVRPVLPDPVGLLRCAGGADLAAIAGFCAQAAVRRTPLLLDGVAVTAAALVAERLAPGAHRWWQAGHRSSEPGHGLALAALGLDPIVDLHMRLGEGTGAAVALMVLRAAVAALSSMATFTEAGVSTRSVDGVDRTAPPAVSP</sequence>
<organism>
    <name type="scientific">Mycobacterium bovis (strain BCG / Tokyo 172 / ATCC 35737 / TMC 1019)</name>
    <dbReference type="NCBI Taxonomy" id="561275"/>
    <lineage>
        <taxon>Bacteria</taxon>
        <taxon>Bacillati</taxon>
        <taxon>Actinomycetota</taxon>
        <taxon>Actinomycetes</taxon>
        <taxon>Mycobacteriales</taxon>
        <taxon>Mycobacteriaceae</taxon>
        <taxon>Mycobacterium</taxon>
        <taxon>Mycobacterium tuberculosis complex</taxon>
    </lineage>
</organism>
<proteinExistence type="inferred from homology"/>
<accession>C1AQC2</accession>
<reference key="1">
    <citation type="journal article" date="2009" name="Vaccine">
        <title>Whole genome sequence analysis of Mycobacterium bovis bacillus Calmette-Guerin (BCG) Tokyo 172: a comparative study of BCG vaccine substrains.</title>
        <authorList>
            <person name="Seki M."/>
            <person name="Honda I."/>
            <person name="Fujita I."/>
            <person name="Yano I."/>
            <person name="Yamamoto S."/>
            <person name="Koyama A."/>
        </authorList>
    </citation>
    <scope>NUCLEOTIDE SEQUENCE [LARGE SCALE GENOMIC DNA]</scope>
    <source>
        <strain>BCG / Tokyo 172 / ATCC 35737 / TMC 1019</strain>
    </source>
</reference>
<comment type="function">
    <text evidence="1">Catalyzes the synthesis of alpha-ribazole-5'-phosphate from nicotinate mononucleotide (NAMN) and 5,6-dimethylbenzimidazole (DMB).</text>
</comment>
<comment type="catalytic activity">
    <reaction evidence="1">
        <text>5,6-dimethylbenzimidazole + nicotinate beta-D-ribonucleotide = alpha-ribazole 5'-phosphate + nicotinate + H(+)</text>
        <dbReference type="Rhea" id="RHEA:11196"/>
        <dbReference type="ChEBI" id="CHEBI:15378"/>
        <dbReference type="ChEBI" id="CHEBI:15890"/>
        <dbReference type="ChEBI" id="CHEBI:32544"/>
        <dbReference type="ChEBI" id="CHEBI:57502"/>
        <dbReference type="ChEBI" id="CHEBI:57918"/>
        <dbReference type="EC" id="2.4.2.21"/>
    </reaction>
</comment>
<comment type="pathway">
    <text evidence="1">Nucleoside biosynthesis; alpha-ribazole biosynthesis; alpha-ribazole from 5,6-dimethylbenzimidazole: step 1/2.</text>
</comment>
<comment type="similarity">
    <text evidence="1">Belongs to the CobT family.</text>
</comment>
<gene>
    <name evidence="1" type="primary">cobT</name>
    <name type="ordered locus">JTY_2217</name>
</gene>
<protein>
    <recommendedName>
        <fullName evidence="1">Nicotinate-nucleotide--dimethylbenzimidazole phosphoribosyltransferase</fullName>
        <shortName evidence="1">NN:DBI PRT</shortName>
        <ecNumber evidence="1">2.4.2.21</ecNumber>
    </recommendedName>
    <alternativeName>
        <fullName evidence="1">N(1)-alpha-phosphoribosyltransferase</fullName>
    </alternativeName>
</protein>
<name>COBT_MYCBT</name>
<evidence type="ECO:0000255" key="1">
    <source>
        <dbReference type="HAMAP-Rule" id="MF_00230"/>
    </source>
</evidence>